<name>LIP1_YEAST</name>
<feature type="chain" id="PRO_0000203352" description="Ceramide synthase subunit LIP1">
    <location>
        <begin position="1"/>
        <end position="150"/>
    </location>
</feature>
<feature type="topological domain" description="Cytoplasmic" evidence="2 5">
    <location>
        <begin position="1"/>
        <end position="20"/>
    </location>
</feature>
<feature type="transmembrane region" description="Helical; Signal-anchor for type II membrane protein" evidence="1 5">
    <location>
        <begin position="21"/>
        <end position="40"/>
    </location>
</feature>
<feature type="topological domain" description="Lumenal" evidence="2 5">
    <location>
        <begin position="41"/>
        <end position="150"/>
    </location>
</feature>
<feature type="binding site" evidence="6 11">
    <location>
        <position position="40"/>
    </location>
    <ligand>
        <name>hexacosanoate</name>
        <dbReference type="ChEBI" id="CHEBI:31013"/>
    </ligand>
</feature>
<feature type="disulfide bond" evidence="4 8 9 10 11">
    <location>
        <begin position="53"/>
        <end position="75"/>
    </location>
</feature>
<feature type="disulfide bond" evidence="4 8 9 10 11">
    <location>
        <begin position="102"/>
        <end position="142"/>
    </location>
</feature>
<feature type="mutagenesis site" description="Partially impairs LAC1-LIP1 complex formation; when associated with F-41." evidence="4">
    <original>V</original>
    <variation>F</variation>
    <location>
        <position position="37"/>
    </location>
</feature>
<feature type="mutagenesis site" description="Partially impairs LAC1-LIP1 complex formation; when associated with Y-41." evidence="4">
    <original>V</original>
    <variation>Y</variation>
    <location>
        <position position="37"/>
    </location>
</feature>
<feature type="mutagenesis site" description="About 60% loss in enzymatic activity of the LAC1-LIP1 complex." evidence="4">
    <original>F</original>
    <variation>A</variation>
    <location>
        <position position="40"/>
    </location>
</feature>
<feature type="mutagenesis site" description="Abolishes the enzymatic activity of the LAC1-LIP1 complex in vitro and leads to the accumulation of phytosphingosine in vivo." evidence="4 6">
    <original>F</original>
    <variation>R</variation>
    <location>
        <position position="40"/>
    </location>
</feature>
<feature type="mutagenesis site" description="Partially impairs LAC1-LIP1 complex formation; when associated with F-37." evidence="4">
    <original>K</original>
    <variation>F</variation>
    <location>
        <position position="41"/>
    </location>
</feature>
<feature type="mutagenesis site" description="Partially impairs LAC1-LIP1 complex formation; when associated with Y-37." evidence="4">
    <original>K</original>
    <variation>Y</variation>
    <location>
        <position position="41"/>
    </location>
</feature>
<feature type="mutagenesis site" description="Does not affect the ceramide synthase complex stability but reduces the enzymatic activity of the complex in vitro." evidence="6">
    <original>WF</original>
    <variation>AA</variation>
    <location>
        <begin position="50"/>
        <end position="51"/>
    </location>
</feature>
<feature type="mutagenesis site" description="Does not affect LAC1-LIP1 complex formation but abolishes enzymatic activity." evidence="4">
    <original>F</original>
    <variation>R</variation>
    <location>
        <position position="51"/>
    </location>
</feature>
<feature type="mutagenesis site" description="Does not affect LAC1-LIP1 complex formation but abolishes enzymatic activity." evidence="4">
    <original>H</original>
    <variation>A</variation>
    <location>
        <position position="52"/>
    </location>
</feature>
<feature type="mutagenesis site" description="About 90% loss in enzymatic activity of the LAC1-LIP1 complex." evidence="4">
    <original>C</original>
    <variation>A</variation>
    <location>
        <position position="53"/>
    </location>
</feature>
<feature type="mutagenesis site" description="Does not affect LAC1-LIP1 complex formation but abolishes enzymatic activity." evidence="4">
    <original>S</original>
    <variation>F</variation>
    <location>
        <position position="74"/>
    </location>
</feature>
<feature type="mutagenesis site" description="About 90% loss in enzymatic activity of the LAC1-LIP1 complex." evidence="4">
    <original>C</original>
    <variation>A</variation>
    <location>
        <position position="75"/>
    </location>
</feature>
<feature type="mutagenesis site" description="About 95% loss in enzymatic activity of the LAC1-LIP1 complex; when associated with A-81, A-125 and A-148." evidence="4">
    <original>R</original>
    <variation>A</variation>
    <location>
        <position position="78"/>
    </location>
</feature>
<feature type="mutagenesis site" description="About 95% loss in enzymatic activity of the LAC1-LIP1 complex; when associated with A-78, A-125 and A-148." evidence="4">
    <original>Y</original>
    <variation>A</variation>
    <location>
        <position position="81"/>
    </location>
</feature>
<feature type="mutagenesis site" description="About 90% loss in enzymatic activity of the LAC1-LIP1 complex." evidence="4">
    <original>C</original>
    <variation>A</variation>
    <location>
        <position position="102"/>
    </location>
</feature>
<feature type="mutagenesis site" description="About 95% loss in enzymatic activity of the LAC1-LIP1 complex; when associated with A-78, A-81 and A-148." evidence="4">
    <original>Y</original>
    <variation>A</variation>
    <location>
        <position position="125"/>
    </location>
</feature>
<feature type="mutagenesis site" description="About 90% loss in enzymatic activity of the LAC1-LIP1 complex." evidence="4">
    <original>C</original>
    <variation>A</variation>
    <location>
        <position position="142"/>
    </location>
</feature>
<feature type="mutagenesis site" description="About 95% loss in enzymatic activity of the LAC1-LIP1 complex; when associated with A-78, A-81 and A-125." evidence="4">
    <original>Y</original>
    <variation>A</variation>
    <location>
        <position position="148"/>
    </location>
</feature>
<feature type="helix" evidence="15">
    <location>
        <begin position="20"/>
        <end position="46"/>
    </location>
</feature>
<feature type="turn" evidence="15">
    <location>
        <begin position="49"/>
        <end position="51"/>
    </location>
</feature>
<feature type="strand" evidence="15">
    <location>
        <begin position="52"/>
        <end position="59"/>
    </location>
</feature>
<feature type="strand" evidence="15">
    <location>
        <begin position="61"/>
        <end position="63"/>
    </location>
</feature>
<feature type="strand" evidence="15">
    <location>
        <begin position="65"/>
        <end position="72"/>
    </location>
</feature>
<feature type="helix" evidence="15">
    <location>
        <begin position="77"/>
        <end position="91"/>
    </location>
</feature>
<feature type="turn" evidence="15">
    <location>
        <begin position="94"/>
        <end position="96"/>
    </location>
</feature>
<feature type="strand" evidence="15">
    <location>
        <begin position="100"/>
        <end position="105"/>
    </location>
</feature>
<feature type="strand" evidence="15">
    <location>
        <begin position="116"/>
        <end position="118"/>
    </location>
</feature>
<feature type="strand" evidence="15">
    <location>
        <begin position="124"/>
        <end position="129"/>
    </location>
</feature>
<feature type="helix" evidence="15">
    <location>
        <begin position="135"/>
        <end position="141"/>
    </location>
</feature>
<feature type="strand" evidence="15">
    <location>
        <begin position="142"/>
        <end position="145"/>
    </location>
</feature>
<dbReference type="EMBL" id="X80836">
    <property type="protein sequence ID" value="CAA56807.1"/>
    <property type="molecule type" value="Genomic_DNA"/>
</dbReference>
<dbReference type="EMBL" id="BK006946">
    <property type="protein sequence ID" value="DAA10199.1"/>
    <property type="molecule type" value="Genomic_DNA"/>
</dbReference>
<dbReference type="PIR" id="S47459">
    <property type="entry name" value="S47459"/>
</dbReference>
<dbReference type="RefSeq" id="NP_014027.1">
    <property type="nucleotide sequence ID" value="NM_001182807.1"/>
</dbReference>
<dbReference type="PDB" id="8IZD">
    <property type="method" value="EM"/>
    <property type="resolution" value="3.09 A"/>
    <property type="chains" value="B/D=1-150"/>
</dbReference>
<dbReference type="PDB" id="8IZF">
    <property type="method" value="EM"/>
    <property type="resolution" value="3.85 A"/>
    <property type="chains" value="B/D=1-150"/>
</dbReference>
<dbReference type="PDB" id="8QTN">
    <property type="method" value="EM"/>
    <property type="resolution" value="3.00 A"/>
    <property type="chains" value="C/D=18-150"/>
</dbReference>
<dbReference type="PDB" id="8QTR">
    <property type="method" value="EM"/>
    <property type="resolution" value="3.20 A"/>
    <property type="chains" value="C/D=19-150"/>
</dbReference>
<dbReference type="PDB" id="8Y2M">
    <property type="method" value="EM"/>
    <property type="resolution" value="3.07 A"/>
    <property type="chains" value="A/C=1-150"/>
</dbReference>
<dbReference type="PDB" id="8Y2N">
    <property type="method" value="EM"/>
    <property type="resolution" value="3.19 A"/>
    <property type="chains" value="A/C=1-150"/>
</dbReference>
<dbReference type="PDB" id="8ZB1">
    <property type="method" value="EM"/>
    <property type="resolution" value="2.86 A"/>
    <property type="chains" value="A/C=1-150"/>
</dbReference>
<dbReference type="PDBsum" id="8IZD"/>
<dbReference type="PDBsum" id="8IZF"/>
<dbReference type="PDBsum" id="8QTN"/>
<dbReference type="PDBsum" id="8QTR"/>
<dbReference type="PDBsum" id="8Y2M"/>
<dbReference type="PDBsum" id="8Y2N"/>
<dbReference type="PDBsum" id="8ZB1"/>
<dbReference type="EMDB" id="EMD-18652"/>
<dbReference type="EMDB" id="EMD-18653"/>
<dbReference type="EMDB" id="EMD-35862"/>
<dbReference type="EMDB" id="EMD-35863"/>
<dbReference type="EMDB" id="EMD-38857"/>
<dbReference type="EMDB" id="EMD-38858"/>
<dbReference type="EMDB" id="EMD-39894"/>
<dbReference type="SMR" id="Q03579"/>
<dbReference type="BioGRID" id="35478">
    <property type="interactions" value="250"/>
</dbReference>
<dbReference type="ComplexPortal" id="CPX-1706">
    <property type="entry name" value="acyl-CoA ceramide synthase complex"/>
</dbReference>
<dbReference type="DIP" id="DIP-4392N"/>
<dbReference type="FunCoup" id="Q03579">
    <property type="interactions" value="45"/>
</dbReference>
<dbReference type="IntAct" id="Q03579">
    <property type="interactions" value="18"/>
</dbReference>
<dbReference type="STRING" id="4932.YMR298W"/>
<dbReference type="SwissLipids" id="SLP:000000917"/>
<dbReference type="iPTMnet" id="Q03579"/>
<dbReference type="PaxDb" id="4932-YMR298W"/>
<dbReference type="PeptideAtlas" id="Q03579"/>
<dbReference type="EnsemblFungi" id="YMR298W_mRNA">
    <property type="protein sequence ID" value="YMR298W"/>
    <property type="gene ID" value="YMR298W"/>
</dbReference>
<dbReference type="GeneID" id="855344"/>
<dbReference type="KEGG" id="sce:YMR298W"/>
<dbReference type="AGR" id="SGD:S000004913"/>
<dbReference type="SGD" id="S000004913">
    <property type="gene designation" value="LIP1"/>
</dbReference>
<dbReference type="VEuPathDB" id="FungiDB:YMR298W"/>
<dbReference type="eggNOG" id="ENOG502S1YW">
    <property type="taxonomic scope" value="Eukaryota"/>
</dbReference>
<dbReference type="HOGENOM" id="CLU_1759093_0_0_1"/>
<dbReference type="InParanoid" id="Q03579"/>
<dbReference type="OMA" id="STRINYE"/>
<dbReference type="OrthoDB" id="3979149at2759"/>
<dbReference type="BioCyc" id="MetaCyc:MONOMER3O-702"/>
<dbReference type="BioCyc" id="YEAST:MONOMER3O-702"/>
<dbReference type="BRENDA" id="2.3.1.297">
    <property type="organism ID" value="984"/>
</dbReference>
<dbReference type="BioGRID-ORCS" id="855344">
    <property type="hits" value="1 hit in 10 CRISPR screens"/>
</dbReference>
<dbReference type="PRO" id="PR:Q03579"/>
<dbReference type="Proteomes" id="UP000002311">
    <property type="component" value="Chromosome XIII"/>
</dbReference>
<dbReference type="RNAct" id="Q03579">
    <property type="molecule type" value="protein"/>
</dbReference>
<dbReference type="GO" id="GO:0061576">
    <property type="term" value="C:acyl-CoA ceramide synthase complex"/>
    <property type="evidence" value="ECO:0000314"/>
    <property type="project" value="SGD"/>
</dbReference>
<dbReference type="GO" id="GO:0005783">
    <property type="term" value="C:endoplasmic reticulum"/>
    <property type="evidence" value="ECO:0007005"/>
    <property type="project" value="SGD"/>
</dbReference>
<dbReference type="GO" id="GO:0005789">
    <property type="term" value="C:endoplasmic reticulum membrane"/>
    <property type="evidence" value="ECO:0000314"/>
    <property type="project" value="SGD"/>
</dbReference>
<dbReference type="GO" id="GO:0005635">
    <property type="term" value="C:nuclear envelope"/>
    <property type="evidence" value="ECO:0007005"/>
    <property type="project" value="SGD"/>
</dbReference>
<dbReference type="GO" id="GO:0046513">
    <property type="term" value="P:ceramide biosynthetic process"/>
    <property type="evidence" value="ECO:0000314"/>
    <property type="project" value="ComplexPortal"/>
</dbReference>
<dbReference type="CDD" id="cd24143">
    <property type="entry name" value="LIP1-like"/>
    <property type="match status" value="1"/>
</dbReference>
<accession>Q03579</accession>
<accession>D6W0C5</accession>
<gene>
    <name type="primary">LIP1</name>
    <name type="ordered locus">YMR298W</name>
</gene>
<proteinExistence type="evidence at protein level"/>
<reference key="1">
    <citation type="journal article" date="1997" name="Nature">
        <title>The nucleotide sequence of Saccharomyces cerevisiae chromosome XIII.</title>
        <authorList>
            <person name="Bowman S."/>
            <person name="Churcher C.M."/>
            <person name="Badcock K."/>
            <person name="Brown D."/>
            <person name="Chillingworth T."/>
            <person name="Connor R."/>
            <person name="Dedman K."/>
            <person name="Devlin K."/>
            <person name="Gentles S."/>
            <person name="Hamlin N."/>
            <person name="Hunt S."/>
            <person name="Jagels K."/>
            <person name="Lye G."/>
            <person name="Moule S."/>
            <person name="Odell C."/>
            <person name="Pearson D."/>
            <person name="Rajandream M.A."/>
            <person name="Rice P."/>
            <person name="Skelton J."/>
            <person name="Walsh S.V."/>
            <person name="Whitehead S."/>
            <person name="Barrell B.G."/>
        </authorList>
    </citation>
    <scope>NUCLEOTIDE SEQUENCE [LARGE SCALE GENOMIC DNA]</scope>
    <source>
        <strain>ATCC 204508 / S288c</strain>
    </source>
</reference>
<reference key="2">
    <citation type="journal article" date="2014" name="G3 (Bethesda)">
        <title>The reference genome sequence of Saccharomyces cerevisiae: Then and now.</title>
        <authorList>
            <person name="Engel S.R."/>
            <person name="Dietrich F.S."/>
            <person name="Fisk D.G."/>
            <person name="Binkley G."/>
            <person name="Balakrishnan R."/>
            <person name="Costanzo M.C."/>
            <person name="Dwight S.S."/>
            <person name="Hitz B.C."/>
            <person name="Karra K."/>
            <person name="Nash R.S."/>
            <person name="Weng S."/>
            <person name="Wong E.D."/>
            <person name="Lloyd P."/>
            <person name="Skrzypek M.S."/>
            <person name="Miyasato S.R."/>
            <person name="Simison M."/>
            <person name="Cherry J.M."/>
        </authorList>
    </citation>
    <scope>GENOME REANNOTATION</scope>
    <source>
        <strain>ATCC 204508 / S288c</strain>
    </source>
</reference>
<reference key="3">
    <citation type="journal article" date="2005" name="EMBO J.">
        <title>Lip1p: a novel subunit of acyl-CoA ceramide synthase.</title>
        <authorList>
            <person name="Vallee B."/>
            <person name="Riezman H."/>
        </authorList>
    </citation>
    <scope>FUNCTION</scope>
    <scope>IDENTIFICATION BY MASS SPECTROMETRY</scope>
    <scope>SUBCELLULAR LOCATION</scope>
    <scope>TOPOLOGY</scope>
    <scope>INTERACTION WITH LAC1 AND LAG1</scope>
</reference>
<reference evidence="7" key="4">
    <citation type="journal article" date="2022" name="FEBS J.">
        <title>Regulation of sphingolipid biosynthesis in the endoplasmic reticulum via signals from the plasma membrane in budding yeast.</title>
        <authorList>
            <person name="Ishino Y."/>
            <person name="Komatsu N."/>
            <person name="Sakata K.T."/>
            <person name="Yoshikawa D."/>
            <person name="Tani M."/>
            <person name="Maeda T."/>
            <person name="Morishige K."/>
            <person name="Yoshizawa K."/>
            <person name="Tanaka N."/>
            <person name="Tabuchi M."/>
        </authorList>
    </citation>
    <scope>FUNCTION</scope>
</reference>
<reference evidence="8 9" key="5">
    <citation type="journal article" date="2023" name="EMBO J.">
        <title>Structure and mechanism of a eukaryotic ceramide synthase complex.</title>
        <authorList>
            <person name="Xie T."/>
            <person name="Fang Q."/>
            <person name="Zhang Z."/>
            <person name="Wang Y."/>
            <person name="Dong F."/>
            <person name="Gong X."/>
        </authorList>
    </citation>
    <scope>STRUCTURE BY ELECTRON MICROSCOPY (3.09 ANGSTROMS)IN COMPLEX WITH LAC1; HEXACOSANOYL-COA AND 1-PALMITOYL-2-STEAROYL-SN-GLYCERO-3-PHOSPHOCHOLINE</scope>
    <scope>FUNCTION</scope>
    <scope>SUBUNIT</scope>
    <scope>DOMAIN</scope>
    <scope>DISULFIDE BONDS</scope>
    <scope>MUTAGENESIS OF VAL-37; PHE-40; LYS-41; PHE-51; HIS-52; CYS-53; SER-74; CYS-75; ARG-78; TYR-81; CYS-102; TYR-125; CYS-142 AND TYR-148</scope>
</reference>
<reference evidence="10 11" key="6">
    <citation type="journal article" date="2024" name="Nat. Struct. Mol. Biol.">
        <title>Structure of the yeast ceramide synthase.</title>
        <authorList>
            <person name="Schafer J.H."/>
            <person name="Clausmeyer L."/>
            <person name="Korner C."/>
            <person name="Esch B.M."/>
            <person name="Wolf V.N."/>
            <person name="Sapia J."/>
            <person name="Ahmed Y."/>
            <person name="Walter S."/>
            <person name="Vanni S."/>
            <person name="Januliene D."/>
            <person name="Moeller A."/>
            <person name="Frohlich F."/>
        </authorList>
    </citation>
    <scope>STRUCTURE BY ELECTRON MICROSCOPY (3.00 ANGSTROMS) OF 18-150 IN COMPLEX WITH LAC1; LAG1; HEXACOSANOIC ACID; 1,2-DISTEAROYL-SN-GLYCERO-3-PHOSPHOETHANOLAMINE AND FUMONISIN B1</scope>
    <scope>FUNCTION</scope>
    <scope>SUBUNIT</scope>
    <scope>DISULFIDE BONDS</scope>
    <scope>MUTAGENESIS OF PHE-40 AND TRP-50</scope>
</reference>
<reference evidence="12 13 14" key="7">
    <citation type="journal article" date="2024" name="Structure">
        <title>Mechanism of ceramide synthase inhibition by fumonisin B1.</title>
        <authorList>
            <person name="Zhang Z."/>
            <person name="Fang Q."/>
            <person name="Xie T."/>
            <person name="Gong X."/>
        </authorList>
    </citation>
    <scope>STRUCTURE BY ELECTRON MICROSCOPY (2.86 ANGSTROMS) OF LAC1 AND LIP1 IN APO FORM AND COMPLEX WITH HEXACOSANOIC ACID; FUMONISIN B1 AND N-ACYL FUMONISIN B1</scope>
    <scope>SUBUNIT</scope>
</reference>
<sequence length="150" mass="17207">MSQPTPIITTKSAAKPKPKIFNLFRVCFISLLLIAAVEYFKYGTRINYEWFHCTPIKEPQSGSVIKLWARGGPSCDKRGEYKTIVKRITRDYEPNDEHLSFCIIENDNVPPVHYPIHEDKGEPGYVAYVGYDTDSELVQELCADSTIYHM</sequence>
<organism>
    <name type="scientific">Saccharomyces cerevisiae (strain ATCC 204508 / S288c)</name>
    <name type="common">Baker's yeast</name>
    <dbReference type="NCBI Taxonomy" id="559292"/>
    <lineage>
        <taxon>Eukaryota</taxon>
        <taxon>Fungi</taxon>
        <taxon>Dikarya</taxon>
        <taxon>Ascomycota</taxon>
        <taxon>Saccharomycotina</taxon>
        <taxon>Saccharomycetes</taxon>
        <taxon>Saccharomycetales</taxon>
        <taxon>Saccharomycetaceae</taxon>
        <taxon>Saccharomyces</taxon>
    </lineage>
</organism>
<protein>
    <recommendedName>
        <fullName>Ceramide synthase subunit LIP1</fullName>
    </recommendedName>
    <alternativeName>
        <fullName>LAG1/LAC1-interacting protein 1</fullName>
    </alternativeName>
</protein>
<comment type="function">
    <text evidence="2 3 4 6">Component of the ceramide synthase complex required for the synthesis of ceramides (PubMed:15692566, PubMed:34492164, PubMed:37953642, PubMed:39528796). Plays a role in the localization of LAG1 to the nuclear endoplasmic reticulum (PubMed:34492164).</text>
</comment>
<comment type="subunit">
    <text evidence="4 5 6">Component of the ceramide synthase complex composed of at least LAC1, LAG1 and LIP1 (PubMed:37953642, PubMed:38964337, PubMed:39528796). Forms a heterotetrameric complex, where one unit of the LIP1 homodimer interacts with LAC1 and the other with either LAC1 or LAG1 (PubMed:37953642, PubMed:38964337, PubMed:39528796).</text>
</comment>
<comment type="interaction">
    <interactant intactId="EBI-27640">
        <id>Q03579</id>
    </interactant>
    <interactant intactId="EBI-26585">
        <id>P28496</id>
        <label>LAC1</label>
    </interactant>
    <organismsDiffer>false</organismsDiffer>
    <experiments>6</experiments>
</comment>
<comment type="interaction">
    <interactant intactId="EBI-27640">
        <id>Q03579</id>
    </interactant>
    <interactant intactId="EBI-10035">
        <id>P38703</id>
        <label>LAG1</label>
    </interactant>
    <organismsDiffer>false</organismsDiffer>
    <experiments>3</experiments>
</comment>
<comment type="subcellular location">
    <subcellularLocation>
        <location evidence="2">Endoplasmic reticulum membrane</location>
        <topology evidence="2">Single-pass type II membrane protein</topology>
    </subcellularLocation>
    <text evidence="4">The specific interaction of LAC1 and LIP1 at the lumen of the ER may be important for the enzymatic activity of the complex.</text>
</comment>
<comment type="domain">
    <text evidence="4">The C-terminal domain probably plays a role in its function.</text>
</comment>
<comment type="similarity">
    <text evidence="7">Belongs to the LIP1 family.</text>
</comment>
<evidence type="ECO:0000255" key="1"/>
<evidence type="ECO:0000269" key="2">
    <source>
    </source>
</evidence>
<evidence type="ECO:0000269" key="3">
    <source>
    </source>
</evidence>
<evidence type="ECO:0000269" key="4">
    <source>
    </source>
</evidence>
<evidence type="ECO:0000269" key="5">
    <source>
    </source>
</evidence>
<evidence type="ECO:0000269" key="6">
    <source>
    </source>
</evidence>
<evidence type="ECO:0000305" key="7"/>
<evidence type="ECO:0007744" key="8">
    <source>
        <dbReference type="PDB" id="8IZD"/>
    </source>
</evidence>
<evidence type="ECO:0007744" key="9">
    <source>
        <dbReference type="PDB" id="8IZF"/>
    </source>
</evidence>
<evidence type="ECO:0007744" key="10">
    <source>
        <dbReference type="PDB" id="8QTN"/>
    </source>
</evidence>
<evidence type="ECO:0007744" key="11">
    <source>
        <dbReference type="PDB" id="8QTR"/>
    </source>
</evidence>
<evidence type="ECO:0007744" key="12">
    <source>
        <dbReference type="PDB" id="8Y2M"/>
    </source>
</evidence>
<evidence type="ECO:0007744" key="13">
    <source>
        <dbReference type="PDB" id="8Y2N"/>
    </source>
</evidence>
<evidence type="ECO:0007744" key="14">
    <source>
        <dbReference type="PDB" id="8ZB1"/>
    </source>
</evidence>
<evidence type="ECO:0007829" key="15">
    <source>
        <dbReference type="PDB" id="8IZD"/>
    </source>
</evidence>
<keyword id="KW-0002">3D-structure</keyword>
<keyword id="KW-1015">Disulfide bond</keyword>
<keyword id="KW-0256">Endoplasmic reticulum</keyword>
<keyword id="KW-0444">Lipid biosynthesis</keyword>
<keyword id="KW-0443">Lipid metabolism</keyword>
<keyword id="KW-0472">Membrane</keyword>
<keyword id="KW-1185">Reference proteome</keyword>
<keyword id="KW-0735">Signal-anchor</keyword>
<keyword id="KW-0812">Transmembrane</keyword>
<keyword id="KW-1133">Transmembrane helix</keyword>